<evidence type="ECO:0000269" key="1">
    <source>
    </source>
</evidence>
<evidence type="ECO:0000303" key="2">
    <source>
    </source>
</evidence>
<evidence type="ECO:0000305" key="3"/>
<evidence type="ECO:0000305" key="4">
    <source>
    </source>
</evidence>
<reference key="1">
    <citation type="journal article" date="2015" name="Br. J. Pharmacol.">
        <title>Seven novel modulators of the analgesic target NaV 1.7 uncovered using a high-throughput venom-based discovery approach.</title>
        <authorList>
            <person name="Klint J.K."/>
            <person name="Smith J.J."/>
            <person name="Vetter I."/>
            <person name="Rupasinghe D.B."/>
            <person name="Er S.Y."/>
            <person name="Senff S."/>
            <person name="Herzig V."/>
            <person name="Mobli M."/>
            <person name="Lewis R.J."/>
            <person name="Bosmans F."/>
            <person name="King G.F."/>
        </authorList>
    </citation>
    <scope>PROTEIN SEQUENCE</scope>
    <scope>FUNCTION</scope>
    <scope>MASS SPECTROMETRY</scope>
    <scope>SUBCELLULAR LOCATION</scope>
    <source>
        <tissue>Venom</tissue>
    </source>
</reference>
<dbReference type="SMR" id="P0DP98"/>
<dbReference type="GO" id="GO:0005576">
    <property type="term" value="C:extracellular region"/>
    <property type="evidence" value="ECO:0007669"/>
    <property type="project" value="UniProtKB-SubCell"/>
</dbReference>
<dbReference type="GO" id="GO:0008200">
    <property type="term" value="F:ion channel inhibitor activity"/>
    <property type="evidence" value="ECO:0007669"/>
    <property type="project" value="InterPro"/>
</dbReference>
<dbReference type="GO" id="GO:0017080">
    <property type="term" value="F:sodium channel regulator activity"/>
    <property type="evidence" value="ECO:0007669"/>
    <property type="project" value="UniProtKB-KW"/>
</dbReference>
<dbReference type="GO" id="GO:0090729">
    <property type="term" value="F:toxin activity"/>
    <property type="evidence" value="ECO:0007669"/>
    <property type="project" value="UniProtKB-KW"/>
</dbReference>
<dbReference type="InterPro" id="IPR011696">
    <property type="entry name" value="Huwentoxin-1"/>
</dbReference>
<dbReference type="Pfam" id="PF07740">
    <property type="entry name" value="Toxin_12"/>
    <property type="match status" value="1"/>
</dbReference>
<dbReference type="SUPFAM" id="SSF57059">
    <property type="entry name" value="omega toxin-like"/>
    <property type="match status" value="1"/>
</dbReference>
<comment type="function">
    <text evidence="1">Voltage-gated sodium channel Nav1.7/SCN9A inhibitor.</text>
</comment>
<comment type="subcellular location">
    <subcellularLocation>
        <location evidence="1">Secreted</location>
    </subcellularLocation>
</comment>
<comment type="tissue specificity">
    <text evidence="4">Expressed by the venom gland.</text>
</comment>
<comment type="mass spectrometry">
    <text>Monoisotopic mass.</text>
</comment>
<comment type="similarity">
    <text evidence="3">Belongs to the neurotoxin 10 (Hwtx-1) family.</text>
</comment>
<proteinExistence type="evidence at protein level"/>
<feature type="chain" id="PRO_0000441856" description="Mu-theraphotoxin-Se1a" evidence="1">
    <location>
        <begin position="1"/>
        <end position="32"/>
    </location>
</feature>
<feature type="disulfide bond" evidence="4">
    <location>
        <begin position="2"/>
        <end position="17"/>
    </location>
</feature>
<feature type="disulfide bond" evidence="4">
    <location>
        <begin position="9"/>
        <end position="22"/>
    </location>
</feature>
<feature type="disulfide bond" evidence="4">
    <location>
        <begin position="16"/>
        <end position="28"/>
    </location>
</feature>
<sequence>DCLGWMAGCDFNDNKCCAGYVCKKHPWCRYDL</sequence>
<accession>P0DP98</accession>
<name>NTA_SELEF</name>
<organism>
    <name type="scientific">Selenocosmia effera</name>
    <name type="common">Tarantula spider</name>
    <dbReference type="NCBI Taxonomy" id="2024412"/>
    <lineage>
        <taxon>Eukaryota</taxon>
        <taxon>Metazoa</taxon>
        <taxon>Ecdysozoa</taxon>
        <taxon>Arthropoda</taxon>
        <taxon>Chelicerata</taxon>
        <taxon>Arachnida</taxon>
        <taxon>Araneae</taxon>
        <taxon>Mygalomorphae</taxon>
        <taxon>Theraphosidae</taxon>
        <taxon>Selenocosmia</taxon>
    </lineage>
</organism>
<keyword id="KW-0903">Direct protein sequencing</keyword>
<keyword id="KW-1015">Disulfide bond</keyword>
<keyword id="KW-0872">Ion channel impairing toxin</keyword>
<keyword id="KW-0960">Knottin</keyword>
<keyword id="KW-0528">Neurotoxin</keyword>
<keyword id="KW-0964">Secreted</keyword>
<keyword id="KW-0800">Toxin</keyword>
<keyword id="KW-0738">Voltage-gated sodium channel impairing toxin</keyword>
<protein>
    <recommendedName>
        <fullName evidence="2">Mu-theraphotoxin-Se1a</fullName>
        <shortName evidence="2">Mu-TRTX-Se1a</shortName>
    </recommendedName>
</protein>